<proteinExistence type="evidence at protein level"/>
<organism>
    <name type="scientific">Streptomyces lividans</name>
    <dbReference type="NCBI Taxonomy" id="1916"/>
    <lineage>
        <taxon>Bacteria</taxon>
        <taxon>Bacillati</taxon>
        <taxon>Actinomycetota</taxon>
        <taxon>Actinomycetes</taxon>
        <taxon>Kitasatosporales</taxon>
        <taxon>Streptomycetaceae</taxon>
        <taxon>Streptomyces</taxon>
    </lineage>
</organism>
<accession>P26514</accession>
<accession>P96464</accession>
<evidence type="ECO:0000255" key="1">
    <source>
        <dbReference type="PROSITE-ProRule" id="PRU00174"/>
    </source>
</evidence>
<evidence type="ECO:0000255" key="2">
    <source>
        <dbReference type="PROSITE-ProRule" id="PRU01096"/>
    </source>
</evidence>
<evidence type="ECO:0000269" key="3">
    <source>
    </source>
</evidence>
<evidence type="ECO:0000269" key="4">
    <source>
    </source>
</evidence>
<evidence type="ECO:0000305" key="5"/>
<evidence type="ECO:0007829" key="6">
    <source>
        <dbReference type="PDB" id="1KNL"/>
    </source>
</evidence>
<evidence type="ECO:0007829" key="7">
    <source>
        <dbReference type="PDB" id="1OD8"/>
    </source>
</evidence>
<evidence type="ECO:0007829" key="8">
    <source>
        <dbReference type="PDB" id="1V0L"/>
    </source>
</evidence>
<reference key="1">
    <citation type="journal article" date="1991" name="Gene">
        <title>Sequences of three genes specifying xylanases in Streptomyces lividans.</title>
        <authorList>
            <person name="Shareck F."/>
            <person name="Roy C."/>
            <person name="Yaguchi M."/>
            <person name="Morosoli R."/>
            <person name="Kluepfel D."/>
        </authorList>
    </citation>
    <scope>NUCLEOTIDE SEQUENCE [GENOMIC DNA]</scope>
    <scope>PROTEIN SEQUENCE OF 42-92</scope>
    <source>
        <strain>66 / 1326</strain>
    </source>
</reference>
<reference key="2">
    <citation type="submission" date="1998-07" db="EMBL/GenBank/DDBJ databases">
        <authorList>
            <person name="Shareck F."/>
        </authorList>
    </citation>
    <scope>SEQUENCE REVISION TO 20 AND 140-141</scope>
</reference>
<reference key="3">
    <citation type="journal article" date="1994" name="J. Biol. Chem.">
        <title>Crystal structure, at 2.6-A resolution, of the Streptomyces lividans xylanase A, a member of the F family of beta-1,4-D-glycanases.</title>
        <authorList>
            <person name="Derewenda U."/>
            <person name="Swenson L."/>
            <person name="Green R."/>
            <person name="Wei Y.Y."/>
            <person name="Morosoli R."/>
            <person name="Shareck F."/>
            <person name="Kluepfel D."/>
            <person name="Derewenda Z.S."/>
        </authorList>
    </citation>
    <scope>X-RAY CRYSTALLOGRAPHY (2.6 ANGSTROMS) OF 42-340</scope>
</reference>
<reference key="4">
    <citation type="journal article" date="2002" name="Biochemistry">
        <title>High-resolution crystal structures of the lectin-like xylan binding domain from Streptomyces lividans xylanase 10A with bound substrates reveal a novel mode of xylan binding.</title>
        <authorList>
            <person name="Notenboom V."/>
            <person name="Boraston A.B."/>
            <person name="Williams S.J."/>
            <person name="Kilburn D.G."/>
            <person name="Rose D.R."/>
        </authorList>
    </citation>
    <scope>X-RAY CRYSTALLOGRAPHY (1.7 ANGSTROMS) OF 348-477</scope>
    <scope>DISULFIDE BONDS</scope>
</reference>
<feature type="signal peptide" evidence="4">
    <location>
        <begin position="1"/>
        <end position="41"/>
    </location>
</feature>
<feature type="chain" id="PRO_0000007979" description="Endo-1,4-beta-xylanase A">
    <location>
        <begin position="42"/>
        <end position="477"/>
    </location>
</feature>
<feature type="domain" description="GH10" evidence="2">
    <location>
        <begin position="42"/>
        <end position="340"/>
    </location>
</feature>
<feature type="domain" description="Ricin B-type lectin" evidence="1">
    <location>
        <begin position="361"/>
        <end position="477"/>
    </location>
</feature>
<feature type="active site" description="Proton donor">
    <location>
        <position position="169"/>
    </location>
</feature>
<feature type="active site" description="Nucleophile">
    <location>
        <position position="277"/>
    </location>
</feature>
<feature type="disulfide bond" evidence="1 3">
    <location>
        <begin position="364"/>
        <end position="383"/>
    </location>
</feature>
<feature type="disulfide bond" evidence="1 3">
    <location>
        <begin position="406"/>
        <end position="423"/>
    </location>
</feature>
<feature type="disulfide bond" evidence="1 3">
    <location>
        <begin position="447"/>
        <end position="466"/>
    </location>
</feature>
<feature type="helix" evidence="8">
    <location>
        <begin position="46"/>
        <end position="51"/>
    </location>
</feature>
<feature type="turn" evidence="8">
    <location>
        <begin position="52"/>
        <end position="54"/>
    </location>
</feature>
<feature type="strand" evidence="8">
    <location>
        <begin position="56"/>
        <end position="61"/>
    </location>
</feature>
<feature type="helix" evidence="8">
    <location>
        <begin position="63"/>
        <end position="65"/>
    </location>
</feature>
<feature type="helix" evidence="8">
    <location>
        <begin position="69"/>
        <end position="78"/>
    </location>
</feature>
<feature type="strand" evidence="8">
    <location>
        <begin position="80"/>
        <end position="86"/>
    </location>
</feature>
<feature type="helix" evidence="8">
    <location>
        <begin position="90"/>
        <end position="93"/>
    </location>
</feature>
<feature type="helix" evidence="8">
    <location>
        <begin position="103"/>
        <end position="114"/>
    </location>
</feature>
<feature type="strand" evidence="8">
    <location>
        <begin position="118"/>
        <end position="125"/>
    </location>
</feature>
<feature type="strand" evidence="8">
    <location>
        <begin position="127"/>
        <end position="129"/>
    </location>
</feature>
<feature type="helix" evidence="8">
    <location>
        <begin position="132"/>
        <end position="135"/>
    </location>
</feature>
<feature type="helix" evidence="8">
    <location>
        <begin position="139"/>
        <end position="156"/>
    </location>
</feature>
<feature type="turn" evidence="8">
    <location>
        <begin position="157"/>
        <end position="160"/>
    </location>
</feature>
<feature type="strand" evidence="8">
    <location>
        <begin position="162"/>
        <end position="168"/>
    </location>
</feature>
<feature type="strand" evidence="8">
    <location>
        <begin position="173"/>
        <end position="176"/>
    </location>
</feature>
<feature type="helix" evidence="8">
    <location>
        <begin position="183"/>
        <end position="186"/>
    </location>
</feature>
<feature type="helix" evidence="8">
    <location>
        <begin position="191"/>
        <end position="202"/>
    </location>
</feature>
<feature type="strand" evidence="8">
    <location>
        <begin position="206"/>
        <end position="214"/>
    </location>
</feature>
<feature type="helix" evidence="8">
    <location>
        <begin position="221"/>
        <end position="236"/>
    </location>
</feature>
<feature type="strand" evidence="8">
    <location>
        <begin position="242"/>
        <end position="245"/>
    </location>
</feature>
<feature type="strand" evidence="8">
    <location>
        <begin position="248"/>
        <end position="250"/>
    </location>
</feature>
<feature type="strand" evidence="7">
    <location>
        <begin position="251"/>
        <end position="253"/>
    </location>
</feature>
<feature type="helix" evidence="8">
    <location>
        <begin position="259"/>
        <end position="267"/>
    </location>
</feature>
<feature type="turn" evidence="8">
    <location>
        <begin position="268"/>
        <end position="270"/>
    </location>
</feature>
<feature type="strand" evidence="8">
    <location>
        <begin position="272"/>
        <end position="280"/>
    </location>
</feature>
<feature type="helix" evidence="8">
    <location>
        <begin position="285"/>
        <end position="296"/>
    </location>
</feature>
<feature type="strand" evidence="8">
    <location>
        <begin position="301"/>
        <end position="307"/>
    </location>
</feature>
<feature type="helix" evidence="8">
    <location>
        <begin position="311"/>
        <end position="313"/>
    </location>
</feature>
<feature type="helix" evidence="8">
    <location>
        <begin position="317"/>
        <end position="319"/>
    </location>
</feature>
<feature type="strand" evidence="8">
    <location>
        <begin position="322"/>
        <end position="324"/>
    </location>
</feature>
<feature type="helix" evidence="8">
    <location>
        <begin position="332"/>
        <end position="341"/>
    </location>
</feature>
<feature type="turn" evidence="6">
    <location>
        <begin position="359"/>
        <end position="361"/>
    </location>
</feature>
<feature type="strand" evidence="6">
    <location>
        <begin position="364"/>
        <end position="366"/>
    </location>
</feature>
<feature type="helix" evidence="6">
    <location>
        <begin position="368"/>
        <end position="370"/>
    </location>
</feature>
<feature type="strand" evidence="6">
    <location>
        <begin position="379"/>
        <end position="381"/>
    </location>
</feature>
<feature type="helix" evidence="6">
    <location>
        <begin position="387"/>
        <end position="389"/>
    </location>
</feature>
<feature type="strand" evidence="6">
    <location>
        <begin position="391"/>
        <end position="393"/>
    </location>
</feature>
<feature type="strand" evidence="6">
    <location>
        <begin position="399"/>
        <end position="401"/>
    </location>
</feature>
<feature type="turn" evidence="6">
    <location>
        <begin position="402"/>
        <end position="404"/>
    </location>
</feature>
<feature type="strand" evidence="6">
    <location>
        <begin position="405"/>
        <end position="410"/>
    </location>
</feature>
<feature type="strand" evidence="6">
    <location>
        <begin position="417"/>
        <end position="422"/>
    </location>
</feature>
<feature type="helix" evidence="6">
    <location>
        <begin position="427"/>
        <end position="429"/>
    </location>
</feature>
<feature type="strand" evidence="6">
    <location>
        <begin position="431"/>
        <end position="433"/>
    </location>
</feature>
<feature type="strand" evidence="6">
    <location>
        <begin position="439"/>
        <end position="441"/>
    </location>
</feature>
<feature type="turn" evidence="6">
    <location>
        <begin position="442"/>
        <end position="444"/>
    </location>
</feature>
<feature type="strand" evidence="6">
    <location>
        <begin position="447"/>
        <end position="450"/>
    </location>
</feature>
<feature type="helix" evidence="6">
    <location>
        <begin position="451"/>
        <end position="453"/>
    </location>
</feature>
<feature type="strand" evidence="6">
    <location>
        <begin position="460"/>
        <end position="464"/>
    </location>
</feature>
<feature type="helix" evidence="6">
    <location>
        <begin position="470"/>
        <end position="472"/>
    </location>
</feature>
<name>XYNA_STRLI</name>
<keyword id="KW-0002">3D-structure</keyword>
<keyword id="KW-0119">Carbohydrate metabolism</keyword>
<keyword id="KW-0903">Direct protein sequencing</keyword>
<keyword id="KW-1015">Disulfide bond</keyword>
<keyword id="KW-0326">Glycosidase</keyword>
<keyword id="KW-0378">Hydrolase</keyword>
<keyword id="KW-0430">Lectin</keyword>
<keyword id="KW-0624">Polysaccharide degradation</keyword>
<keyword id="KW-0964">Secreted</keyword>
<keyword id="KW-0732">Signal</keyword>
<keyword id="KW-0858">Xylan degradation</keyword>
<gene>
    <name type="primary">xlnA</name>
</gene>
<dbReference type="EC" id="3.2.1.8"/>
<dbReference type="EMBL" id="M64551">
    <property type="protein sequence ID" value="AAC26525.1"/>
    <property type="molecule type" value="Genomic_DNA"/>
</dbReference>
<dbReference type="PIR" id="JS0589">
    <property type="entry name" value="JS0589"/>
</dbReference>
<dbReference type="PDB" id="1E0V">
    <property type="method" value="X-ray"/>
    <property type="resolution" value="1.70 A"/>
    <property type="chains" value="A=42-343"/>
</dbReference>
<dbReference type="PDB" id="1E0W">
    <property type="method" value="X-ray"/>
    <property type="resolution" value="1.20 A"/>
    <property type="chains" value="A=42-343"/>
</dbReference>
<dbReference type="PDB" id="1E0X">
    <property type="method" value="X-ray"/>
    <property type="resolution" value="1.65 A"/>
    <property type="chains" value="A/B=42-350"/>
</dbReference>
<dbReference type="PDB" id="1KNL">
    <property type="method" value="X-ray"/>
    <property type="resolution" value="1.20 A"/>
    <property type="chains" value="A=348-477"/>
</dbReference>
<dbReference type="PDB" id="1KNM">
    <property type="method" value="X-ray"/>
    <property type="resolution" value="1.20 A"/>
    <property type="chains" value="A=348-477"/>
</dbReference>
<dbReference type="PDB" id="1MC9">
    <property type="method" value="X-ray"/>
    <property type="resolution" value="1.70 A"/>
    <property type="chains" value="A=348-477"/>
</dbReference>
<dbReference type="PDB" id="1OD8">
    <property type="method" value="X-ray"/>
    <property type="resolution" value="1.05 A"/>
    <property type="chains" value="A=42-354"/>
</dbReference>
<dbReference type="PDB" id="1V0K">
    <property type="method" value="X-ray"/>
    <property type="resolution" value="1.03 A"/>
    <property type="chains" value="A=42-354"/>
</dbReference>
<dbReference type="PDB" id="1V0L">
    <property type="method" value="X-ray"/>
    <property type="resolution" value="0.98 A"/>
    <property type="chains" value="A=42-354"/>
</dbReference>
<dbReference type="PDB" id="1V0M">
    <property type="method" value="X-ray"/>
    <property type="resolution" value="1.07 A"/>
    <property type="chains" value="A=42-354"/>
</dbReference>
<dbReference type="PDB" id="1V0N">
    <property type="method" value="X-ray"/>
    <property type="resolution" value="1.10 A"/>
    <property type="chains" value="A=42-354"/>
</dbReference>
<dbReference type="PDB" id="1XAS">
    <property type="method" value="X-ray"/>
    <property type="resolution" value="2.60 A"/>
    <property type="chains" value="A=42-340"/>
</dbReference>
<dbReference type="PDBsum" id="1E0V"/>
<dbReference type="PDBsum" id="1E0W"/>
<dbReference type="PDBsum" id="1E0X"/>
<dbReference type="PDBsum" id="1KNL"/>
<dbReference type="PDBsum" id="1KNM"/>
<dbReference type="PDBsum" id="1MC9"/>
<dbReference type="PDBsum" id="1OD8"/>
<dbReference type="PDBsum" id="1V0K"/>
<dbReference type="PDBsum" id="1V0L"/>
<dbReference type="PDBsum" id="1V0M"/>
<dbReference type="PDBsum" id="1V0N"/>
<dbReference type="PDBsum" id="1XAS"/>
<dbReference type="BMRB" id="P26514"/>
<dbReference type="SMR" id="P26514"/>
<dbReference type="DrugBank" id="DB03389">
    <property type="generic name" value="alpha-D-Xylopyranose"/>
</dbReference>
<dbReference type="DrugBank" id="DB03366">
    <property type="generic name" value="Imidazole"/>
</dbReference>
<dbReference type="DrugBank" id="DB04465">
    <property type="generic name" value="Lactose"/>
</dbReference>
<dbReference type="CAZy" id="CBM13">
    <property type="family name" value="Carbohydrate-Binding Module Family 13"/>
</dbReference>
<dbReference type="CAZy" id="GH10">
    <property type="family name" value="Glycoside Hydrolase Family 10"/>
</dbReference>
<dbReference type="UniLectin" id="P26514"/>
<dbReference type="BRENDA" id="3.2.1.8">
    <property type="organism ID" value="6052"/>
</dbReference>
<dbReference type="UniPathway" id="UPA00114"/>
<dbReference type="EvolutionaryTrace" id="P26514"/>
<dbReference type="GO" id="GO:0005576">
    <property type="term" value="C:extracellular region"/>
    <property type="evidence" value="ECO:0007669"/>
    <property type="project" value="UniProtKB-SubCell"/>
</dbReference>
<dbReference type="GO" id="GO:0030246">
    <property type="term" value="F:carbohydrate binding"/>
    <property type="evidence" value="ECO:0007669"/>
    <property type="project" value="UniProtKB-KW"/>
</dbReference>
<dbReference type="GO" id="GO:0031176">
    <property type="term" value="F:endo-1,4-beta-xylanase activity"/>
    <property type="evidence" value="ECO:0007669"/>
    <property type="project" value="UniProtKB-EC"/>
</dbReference>
<dbReference type="GO" id="GO:0045493">
    <property type="term" value="P:xylan catabolic process"/>
    <property type="evidence" value="ECO:0007669"/>
    <property type="project" value="UniProtKB-UniPathway"/>
</dbReference>
<dbReference type="CDD" id="cd23418">
    <property type="entry name" value="beta-trefoil_Ricin_XLN-like"/>
    <property type="match status" value="1"/>
</dbReference>
<dbReference type="Gene3D" id="2.80.10.50">
    <property type="match status" value="1"/>
</dbReference>
<dbReference type="Gene3D" id="3.20.20.80">
    <property type="entry name" value="Glycosidases"/>
    <property type="match status" value="1"/>
</dbReference>
<dbReference type="InterPro" id="IPR044846">
    <property type="entry name" value="GH10"/>
</dbReference>
<dbReference type="InterPro" id="IPR031158">
    <property type="entry name" value="GH10_AS"/>
</dbReference>
<dbReference type="InterPro" id="IPR001000">
    <property type="entry name" value="GH10_dom"/>
</dbReference>
<dbReference type="InterPro" id="IPR017853">
    <property type="entry name" value="Glycoside_hydrolase_SF"/>
</dbReference>
<dbReference type="InterPro" id="IPR035992">
    <property type="entry name" value="Ricin_B-like_lectins"/>
</dbReference>
<dbReference type="InterPro" id="IPR000772">
    <property type="entry name" value="Ricin_B_lectin"/>
</dbReference>
<dbReference type="PANTHER" id="PTHR31490:SF88">
    <property type="entry name" value="BETA-XYLANASE"/>
    <property type="match status" value="1"/>
</dbReference>
<dbReference type="PANTHER" id="PTHR31490">
    <property type="entry name" value="GLYCOSYL HYDROLASE"/>
    <property type="match status" value="1"/>
</dbReference>
<dbReference type="Pfam" id="PF00331">
    <property type="entry name" value="Glyco_hydro_10"/>
    <property type="match status" value="1"/>
</dbReference>
<dbReference type="Pfam" id="PF00652">
    <property type="entry name" value="Ricin_B_lectin"/>
    <property type="match status" value="1"/>
</dbReference>
<dbReference type="PRINTS" id="PR00134">
    <property type="entry name" value="GLHYDRLASE10"/>
</dbReference>
<dbReference type="SMART" id="SM00633">
    <property type="entry name" value="Glyco_10"/>
    <property type="match status" value="1"/>
</dbReference>
<dbReference type="SMART" id="SM00458">
    <property type="entry name" value="RICIN"/>
    <property type="match status" value="1"/>
</dbReference>
<dbReference type="SUPFAM" id="SSF51445">
    <property type="entry name" value="(Trans)glycosidases"/>
    <property type="match status" value="1"/>
</dbReference>
<dbReference type="SUPFAM" id="SSF50370">
    <property type="entry name" value="Ricin B-like lectins"/>
    <property type="match status" value="1"/>
</dbReference>
<dbReference type="PROSITE" id="PS00591">
    <property type="entry name" value="GH10_1"/>
    <property type="match status" value="1"/>
</dbReference>
<dbReference type="PROSITE" id="PS51760">
    <property type="entry name" value="GH10_2"/>
    <property type="match status" value="1"/>
</dbReference>
<dbReference type="PROSITE" id="PS50231">
    <property type="entry name" value="RICIN_B_LECTIN"/>
    <property type="match status" value="1"/>
</dbReference>
<sequence length="477" mass="51163">MGSYALPRSGVRRSIRVLLLALVVGVLGTATALIAPPGAHAAESTLGAAAAQSGRYFGTAIASGRLSDSTYTSIAGREFNMVTAENEMKIDATEPQRGQFNFSSADRVYNWAVQNGKQVRGHTLAWHSQQPGWMQSLSGSALRQAMIDHINGVMAHYKGKIVQWDVVNEAFADGSSGARRDSNLQRSGNDWIEVAFRTARAADPSAKLCYNDYNVENWTWAKTQAMYNMVRDFKQRGVPIDCVGFQSHFNSGSPYNSNFRTTLQNFAALGVDVAITELDIQGAPASTYANVTNDCLAVSRCLGITVWGVRDSDSWRSEQTPLLFNNDGSKKAAYTAVLDALNGGDSSEPPADGGQIKGVGSGRCLDVPDASTSDGTQLQLWDCHSGTNQQWAATDAGELRVYGDKCLDAAGTSNGSKVQIYSCWGGDNQKWRLNSDGSVVGVQSGLCLDAVGNGTANGTLIQLYTCSNGSNQRWTRT</sequence>
<protein>
    <recommendedName>
        <fullName>Endo-1,4-beta-xylanase A</fullName>
        <shortName>Xylanase A</shortName>
        <ecNumber>3.2.1.8</ecNumber>
    </recommendedName>
    <alternativeName>
        <fullName>1,4-beta-D-xylan xylanohydrolase A</fullName>
    </alternativeName>
</protein>
<comment type="function">
    <text>Contributes to hydrolyze hemicellulose, the major component of plant cell-walls. XLNA and XLNB seem to act sequentially on the substrate to yield xylobiose and xylose as carbon sources.</text>
</comment>
<comment type="catalytic activity">
    <reaction>
        <text>Endohydrolysis of (1-&gt;4)-beta-D-xylosidic linkages in xylans.</text>
        <dbReference type="EC" id="3.2.1.8"/>
    </reaction>
</comment>
<comment type="pathway">
    <text>Glycan degradation; xylan degradation.</text>
</comment>
<comment type="subcellular location">
    <subcellularLocation>
        <location>Secreted</location>
    </subcellularLocation>
</comment>
<comment type="similarity">
    <text evidence="5">Belongs to the glycosyl hydrolase 10 (cellulase F) family.</text>
</comment>